<dbReference type="EC" id="2.1.1.-"/>
<dbReference type="EMBL" id="FQ312006">
    <property type="protein sequence ID" value="CBW29614.1"/>
    <property type="molecule type" value="Genomic_DNA"/>
</dbReference>
<dbReference type="RefSeq" id="WP_015702159.1">
    <property type="nucleotide sequence ID" value="NC_016809.1"/>
</dbReference>
<dbReference type="SMR" id="E1X791"/>
<dbReference type="KEGG" id="hiu:HIB_14270"/>
<dbReference type="PATRIC" id="fig|862964.3.peg.1480"/>
<dbReference type="HOGENOM" id="CLU_084458_0_0_6"/>
<dbReference type="Proteomes" id="UP000008964">
    <property type="component" value="Chromosome"/>
</dbReference>
<dbReference type="GO" id="GO:0005737">
    <property type="term" value="C:cytoplasm"/>
    <property type="evidence" value="ECO:0007669"/>
    <property type="project" value="InterPro"/>
</dbReference>
<dbReference type="GO" id="GO:0008757">
    <property type="term" value="F:S-adenosylmethionine-dependent methyltransferase activity"/>
    <property type="evidence" value="ECO:0007669"/>
    <property type="project" value="InterPro"/>
</dbReference>
<dbReference type="GO" id="GO:0032259">
    <property type="term" value="P:methylation"/>
    <property type="evidence" value="ECO:0007669"/>
    <property type="project" value="UniProtKB-KW"/>
</dbReference>
<dbReference type="GO" id="GO:0046690">
    <property type="term" value="P:response to tellurium ion"/>
    <property type="evidence" value="ECO:0007669"/>
    <property type="project" value="InterPro"/>
</dbReference>
<dbReference type="CDD" id="cd02440">
    <property type="entry name" value="AdoMet_MTases"/>
    <property type="match status" value="1"/>
</dbReference>
<dbReference type="Gene3D" id="2.60.120.10">
    <property type="entry name" value="Jelly Rolls"/>
    <property type="match status" value="1"/>
</dbReference>
<dbReference type="Gene3D" id="3.40.50.150">
    <property type="entry name" value="Vaccinia Virus protein VP39"/>
    <property type="match status" value="1"/>
</dbReference>
<dbReference type="InterPro" id="IPR015392">
    <property type="entry name" value="DUF1971"/>
</dbReference>
<dbReference type="InterPro" id="IPR014710">
    <property type="entry name" value="RmlC-like_jellyroll"/>
</dbReference>
<dbReference type="InterPro" id="IPR029063">
    <property type="entry name" value="SAM-dependent_MTases_sf"/>
</dbReference>
<dbReference type="InterPro" id="IPR015985">
    <property type="entry name" value="TehB-like_dom"/>
</dbReference>
<dbReference type="InterPro" id="IPR004537">
    <property type="entry name" value="Tellurite-R_MeTrfase_TehB"/>
</dbReference>
<dbReference type="InterPro" id="IPR014431">
    <property type="entry name" value="Tellurite-R_TehB-2"/>
</dbReference>
<dbReference type="NCBIfam" id="NF008405">
    <property type="entry name" value="PRK11207.1"/>
    <property type="match status" value="1"/>
</dbReference>
<dbReference type="NCBIfam" id="NF008992">
    <property type="entry name" value="PRK12335.1"/>
    <property type="match status" value="1"/>
</dbReference>
<dbReference type="NCBIfam" id="TIGR00477">
    <property type="entry name" value="tehB"/>
    <property type="match status" value="1"/>
</dbReference>
<dbReference type="Pfam" id="PF09313">
    <property type="entry name" value="DUF1971"/>
    <property type="match status" value="1"/>
</dbReference>
<dbReference type="Pfam" id="PF03848">
    <property type="entry name" value="TehB"/>
    <property type="match status" value="1"/>
</dbReference>
<dbReference type="PIRSF" id="PIRSF005215">
    <property type="entry name" value="TehB"/>
    <property type="match status" value="1"/>
</dbReference>
<dbReference type="SUPFAM" id="SSF51197">
    <property type="entry name" value="Clavaminate synthase-like"/>
    <property type="match status" value="1"/>
</dbReference>
<dbReference type="SUPFAM" id="SSF53335">
    <property type="entry name" value="S-adenosyl-L-methionine-dependent methyltransferases"/>
    <property type="match status" value="1"/>
</dbReference>
<sequence>MKNELICYKQMPVWTKDKLPQMFQEKHNTKVGTWGKLTVLKGKIKFYELTENGDVVAEHIFTPESHIPFVEPQAWHRVEALSDDLECTLGFYCKKEDYFSKKYNMTAIHGDVVDAAKIISPCKVLDLGCGQGRNSLYLSLLGYDVTSWDHNENSIAFLNETKEKENLNISTALYDINAANIQENYDFIVSTVVFMFLNRERVPSIIKNMQEHTNVGGYNLIVAAMSTDDVPCPLPFSFTFAENELKEYYKDWEFLEYNENMGELHKTDENGNRIKMKFATMLARKK</sequence>
<accession>E1X791</accession>
<keyword id="KW-0489">Methyltransferase</keyword>
<keyword id="KW-0949">S-adenosyl-L-methionine</keyword>
<keyword id="KW-0808">Transferase</keyword>
<keyword id="KW-0843">Virulence</keyword>
<reference key="1">
    <citation type="submission" date="2010-07" db="EMBL/GenBank/DDBJ databases">
        <title>The genome sequence of Haemophilus influenzae 10810.</title>
        <authorList>
            <person name="Crook D."/>
            <person name="Hood D."/>
            <person name="Moxon R."/>
            <person name="Bentley S.D."/>
            <person name="Aslett M."/>
            <person name="Parkhill J."/>
        </authorList>
    </citation>
    <scope>NUCLEOTIDE SEQUENCE [LARGE SCALE GENOMIC DNA]</scope>
    <source>
        <strain>10810</strain>
    </source>
</reference>
<reference key="2">
    <citation type="journal article" date="2010" name="Microbiology">
        <title>Characterization of the Haemophilus influenzae tehB gene and its role in virulence.</title>
        <authorList>
            <person name="Whitby P.W."/>
            <person name="Seale T.W."/>
            <person name="Morton D.J."/>
            <person name="VanWagoner T.M."/>
            <person name="Stull T.L."/>
        </authorList>
    </citation>
    <scope>FUNCTION</scope>
    <scope>INDUCTION</scope>
    <scope>DISRUPTION PHENOTYPE</scope>
    <source>
        <strain>10810</strain>
    </source>
</reference>
<proteinExistence type="evidence at transcript level"/>
<organism>
    <name type="scientific">Haemophilus influenzae (strain 10810)</name>
    <dbReference type="NCBI Taxonomy" id="862964"/>
    <lineage>
        <taxon>Bacteria</taxon>
        <taxon>Pseudomonadati</taxon>
        <taxon>Pseudomonadota</taxon>
        <taxon>Gammaproteobacteria</taxon>
        <taxon>Pasteurellales</taxon>
        <taxon>Pasteurellaceae</taxon>
        <taxon>Haemophilus</taxon>
    </lineage>
</organism>
<protein>
    <recommendedName>
        <fullName>Probable S-adenosyl-L-methionine-dependent methyltransferase TehB</fullName>
        <ecNumber>2.1.1.-</ecNumber>
    </recommendedName>
    <alternativeName>
        <fullName>Tellurite resistance protein TehB homolog</fullName>
    </alternativeName>
</protein>
<evidence type="ECO:0000250" key="1"/>
<evidence type="ECO:0000269" key="2">
    <source>
    </source>
</evidence>
<evidence type="ECO:0000305" key="3"/>
<gene>
    <name type="primary">tehB</name>
    <name type="ordered locus">HIB_14270</name>
</gene>
<feature type="chain" id="PRO_0000421105" description="Probable S-adenosyl-L-methionine-dependent methyltransferase TehB">
    <location>
        <begin position="1"/>
        <end position="286"/>
    </location>
</feature>
<feature type="binding site" evidence="1">
    <location>
        <position position="128"/>
    </location>
    <ligand>
        <name>S-adenosyl-L-methionine</name>
        <dbReference type="ChEBI" id="CHEBI:59789"/>
    </ligand>
</feature>
<feature type="binding site" evidence="1">
    <location>
        <position position="133"/>
    </location>
    <ligand>
        <name>S-adenosyl-L-methionine</name>
        <dbReference type="ChEBI" id="CHEBI:59789"/>
    </ligand>
</feature>
<feature type="binding site" evidence="1">
    <location>
        <position position="149"/>
    </location>
    <ligand>
        <name>S-adenosyl-L-methionine</name>
        <dbReference type="ChEBI" id="CHEBI:59789"/>
    </ligand>
</feature>
<feature type="binding site" evidence="1">
    <location>
        <begin position="175"/>
        <end position="176"/>
    </location>
    <ligand>
        <name>S-adenosyl-L-methionine</name>
        <dbReference type="ChEBI" id="CHEBI:59789"/>
    </ligand>
</feature>
<feature type="binding site" evidence="1">
    <location>
        <position position="191"/>
    </location>
    <ligand>
        <name>S-adenosyl-L-methionine</name>
        <dbReference type="ChEBI" id="CHEBI:59789"/>
    </ligand>
</feature>
<name>TEHB_HAEI1</name>
<comment type="function">
    <text evidence="2">Probable S-adenosyl-L-methionine-dependent methyltransferase. Plays a role in both resistance to oxidative damage and heme uptake/utilization, and is important for virulence of this organism in an animal model of invasive disease. Also protects H.influenzae from tellurite exposure in vitro; however, since H.influenzae grows only in humans, it is unlikely to encounter tellurite in its natural environment, and it is thus probable that tellurite resistance does not represent a biologically relevant role of TehB.</text>
</comment>
<comment type="induction">
    <text evidence="2">Transcription of tehB is independent of both tellurite exposure and oxidative stress.</text>
</comment>
<comment type="disruption phenotype">
    <text evidence="2">Deletion of tehB leads to an increase in sensitivity both to tellurite and to the oxidizing agents cumene hydroperoxide, tert-butyl hydroperoxide and hydrogen peroxide. The tehB mutant additionally shows a significantly reduced ability to utilize free heme as well as several heme-containing moieties including heme-human serum albumin, hemoglobin and hemoglobin-haptoglobin, to support aerobic growth. Virulence of the mutant strain is reduced compared to the wild-type strain in the infant rat.</text>
</comment>
<comment type="similarity">
    <text evidence="3">Belongs to the TehB family.</text>
</comment>